<gene>
    <name type="primary">FBA2</name>
</gene>
<reference key="1">
    <citation type="journal article" date="2005" name="Fungal Genet. Biol.">
        <title>Paracoccidioides brasiliensis presents two different cDNAs encoding homologues of the fructose 1,6-biphosphate aldolase: protein isolation, cloning of the cDNAs and genes, structural, phylogenetic, and expression analysis.</title>
        <authorList>
            <person name="Carneiro L.C."/>
            <person name="de Faria F.P."/>
            <person name="Felipe M.S.S."/>
            <person name="Pereira M."/>
            <person name="de Almeida Soares C.M."/>
        </authorList>
    </citation>
    <scope>NUCLEOTIDE SEQUENCE [GENOMIC DNA / MRNA]</scope>
    <scope>INDUCTION</scope>
    <source>
        <strain>ATCC MYA-826 / Pb01</strain>
    </source>
</reference>
<comment type="function">
    <text evidence="1">Catalyzes the aldol condensation of dihydroxyacetone phosphate (DHAP or glycerone-phosphate) with glyceraldehyde 3-phosphate (G3P) to form fructose 1,6-bisphosphate (FBP) in gluconeogenesis and the reverse reaction in glycolysis.</text>
</comment>
<comment type="catalytic activity">
    <reaction>
        <text>beta-D-fructose 1,6-bisphosphate = D-glyceraldehyde 3-phosphate + dihydroxyacetone phosphate</text>
        <dbReference type="Rhea" id="RHEA:14729"/>
        <dbReference type="ChEBI" id="CHEBI:32966"/>
        <dbReference type="ChEBI" id="CHEBI:57642"/>
        <dbReference type="ChEBI" id="CHEBI:59776"/>
        <dbReference type="EC" id="4.1.2.13"/>
    </reaction>
</comment>
<comment type="cofactor">
    <cofactor evidence="1">
        <name>Zn(2+)</name>
        <dbReference type="ChEBI" id="CHEBI:29105"/>
    </cofactor>
    <text evidence="1">Binds 2 Zn(2+) ions per subunit. One is catalytic and the other provides a structural contribution.</text>
</comment>
<comment type="pathway">
    <text>Carbohydrate degradation; glycolysis; D-glyceraldehyde 3-phosphate and glycerone phosphate from D-glucose: step 4/4.</text>
</comment>
<comment type="subunit">
    <text evidence="1">Homodimer.</text>
</comment>
<comment type="induction">
    <text evidence="2">Only detected in the mycelia phase, but not in yeast cells.</text>
</comment>
<comment type="similarity">
    <text evidence="3">Belongs to the class II fructose-bisphosphate aldolase family.</text>
</comment>
<comment type="caution">
    <text evidence="3">The DNA coding for this protein is not found in the complete genome of strain ATCC MYA-826 / Pb01.</text>
</comment>
<sequence length="363" mass="39770">MGVKDLLSRKTGVIVGDDVLRLFQHAQENVFAIPAIMVTSSSTGSALEAARDKSPIVLQTSNGAAYFAGKGKGVSNDGQSVAGSIAIAAAHYIRSQAPAYGIPVVLHTDHCAKKLLPWLDGMLDADECYSKLHNEPLFSSHMIDLSEESVEWNIETTAKYLKRAAPMKQWLEMEIGITGGEEDGVNNESVDNNSLYTQPEDIYTIYKTLSAISPYFSIAAGFGNVHGVYRGDIALRPLLRHLHNAKYDEQLKCLQDPLGFFVFHGGSGSSHQPATSITSEFAAKGRVDLEKVAYLPGTSSLVIAPKDYLMSPYGIPVVLHTDHCKYFDPRVQIREGLKHMSARVQEAKDDFNDSNQAKKLLPW</sequence>
<accession>Q8J0N6</accession>
<accession>Q6PT81</accession>
<dbReference type="EC" id="4.1.2.13"/>
<dbReference type="EMBL" id="AY172327">
    <property type="protein sequence ID" value="AAN85569.2"/>
    <property type="molecule type" value="mRNA"/>
</dbReference>
<dbReference type="EMBL" id="AY581212">
    <property type="protein sequence ID" value="AAS99115.2"/>
    <property type="molecule type" value="Genomic_DNA"/>
</dbReference>
<dbReference type="SMR" id="Q8J0N6"/>
<dbReference type="UniPathway" id="UPA00109">
    <property type="reaction ID" value="UER00183"/>
</dbReference>
<dbReference type="GO" id="GO:0005829">
    <property type="term" value="C:cytosol"/>
    <property type="evidence" value="ECO:0007669"/>
    <property type="project" value="TreeGrafter"/>
</dbReference>
<dbReference type="GO" id="GO:0004332">
    <property type="term" value="F:fructose-bisphosphate aldolase activity"/>
    <property type="evidence" value="ECO:0007669"/>
    <property type="project" value="UniProtKB-EC"/>
</dbReference>
<dbReference type="GO" id="GO:0008270">
    <property type="term" value="F:zinc ion binding"/>
    <property type="evidence" value="ECO:0007669"/>
    <property type="project" value="InterPro"/>
</dbReference>
<dbReference type="GO" id="GO:0006094">
    <property type="term" value="P:gluconeogenesis"/>
    <property type="evidence" value="ECO:0007669"/>
    <property type="project" value="TreeGrafter"/>
</dbReference>
<dbReference type="GO" id="GO:0006096">
    <property type="term" value="P:glycolytic process"/>
    <property type="evidence" value="ECO:0007669"/>
    <property type="project" value="UniProtKB-UniPathway"/>
</dbReference>
<dbReference type="Gene3D" id="3.20.20.70">
    <property type="entry name" value="Aldolase class I"/>
    <property type="match status" value="1"/>
</dbReference>
<dbReference type="InterPro" id="IPR013785">
    <property type="entry name" value="Aldolase_TIM"/>
</dbReference>
<dbReference type="InterPro" id="IPR000771">
    <property type="entry name" value="FBA_II"/>
</dbReference>
<dbReference type="InterPro" id="IPR006411">
    <property type="entry name" value="Fruct_bisP_bact"/>
</dbReference>
<dbReference type="NCBIfam" id="TIGR00167">
    <property type="entry name" value="cbbA"/>
    <property type="match status" value="1"/>
</dbReference>
<dbReference type="NCBIfam" id="TIGR01520">
    <property type="entry name" value="FruBisAldo_II_A"/>
    <property type="match status" value="1"/>
</dbReference>
<dbReference type="NCBIfam" id="NF006628">
    <property type="entry name" value="PRK09197.1"/>
    <property type="match status" value="1"/>
</dbReference>
<dbReference type="PANTHER" id="PTHR30559:SF0">
    <property type="entry name" value="FRUCTOSE-BISPHOSPHATE ALDOLASE"/>
    <property type="match status" value="1"/>
</dbReference>
<dbReference type="PANTHER" id="PTHR30559">
    <property type="entry name" value="FRUCTOSE-BISPHOSPHATE ALDOLASE CLASS 2"/>
    <property type="match status" value="1"/>
</dbReference>
<dbReference type="Pfam" id="PF01116">
    <property type="entry name" value="F_bP_aldolase"/>
    <property type="match status" value="1"/>
</dbReference>
<dbReference type="SUPFAM" id="SSF51569">
    <property type="entry name" value="Aldolase"/>
    <property type="match status" value="1"/>
</dbReference>
<dbReference type="PROSITE" id="PS00602">
    <property type="entry name" value="ALDOLASE_CLASS_II_1"/>
    <property type="match status" value="2"/>
</dbReference>
<dbReference type="PROSITE" id="PS00806">
    <property type="entry name" value="ALDOLASE_CLASS_II_2"/>
    <property type="match status" value="1"/>
</dbReference>
<proteinExistence type="evidence at transcript level"/>
<organism>
    <name type="scientific">Paracoccidioides lutzii (strain ATCC MYA-826 / Pb01)</name>
    <name type="common">Paracoccidioides brasiliensis</name>
    <dbReference type="NCBI Taxonomy" id="502779"/>
    <lineage>
        <taxon>Eukaryota</taxon>
        <taxon>Fungi</taxon>
        <taxon>Dikarya</taxon>
        <taxon>Ascomycota</taxon>
        <taxon>Pezizomycotina</taxon>
        <taxon>Eurotiomycetes</taxon>
        <taxon>Eurotiomycetidae</taxon>
        <taxon>Onygenales</taxon>
        <taxon>Ajellomycetaceae</taxon>
        <taxon>Paracoccidioides</taxon>
    </lineage>
</organism>
<protein>
    <recommendedName>
        <fullName>Fructose-bisphosphate aldolase 2</fullName>
        <shortName>FBP aldolase 2</shortName>
        <shortName>FBPA 2</shortName>
        <ecNumber>4.1.2.13</ecNumber>
    </recommendedName>
    <alternativeName>
        <fullName>Fructose-1,6-bisphosphate aldolase 2</fullName>
    </alternativeName>
</protein>
<keyword id="KW-0324">Glycolysis</keyword>
<keyword id="KW-0456">Lyase</keyword>
<keyword id="KW-0479">Metal-binding</keyword>
<keyword id="KW-0862">Zinc</keyword>
<evidence type="ECO:0000250" key="1"/>
<evidence type="ECO:0000269" key="2">
    <source>
    </source>
</evidence>
<evidence type="ECO:0000305" key="3"/>
<name>ALF2_PARBA</name>
<feature type="initiator methionine" description="Removed" evidence="1">
    <location>
        <position position="1"/>
    </location>
</feature>
<feature type="chain" id="PRO_0000178760" description="Fructose-bisphosphate aldolase 2">
    <location>
        <begin position="2"/>
        <end position="363"/>
    </location>
</feature>
<feature type="active site" description="Proton donor" evidence="1">
    <location>
        <position position="109"/>
    </location>
</feature>
<feature type="binding site" evidence="1">
    <location>
        <position position="61"/>
    </location>
    <ligand>
        <name>D-glyceraldehyde 3-phosphate</name>
        <dbReference type="ChEBI" id="CHEBI:59776"/>
    </ligand>
</feature>
<feature type="binding site" evidence="1">
    <location>
        <position position="110"/>
    </location>
    <ligand>
        <name>Zn(2+)</name>
        <dbReference type="ChEBI" id="CHEBI:29105"/>
        <label>1</label>
        <note>catalytic</note>
    </ligand>
</feature>
<feature type="binding site" evidence="1">
    <location>
        <position position="144"/>
    </location>
    <ligand>
        <name>Zn(2+)</name>
        <dbReference type="ChEBI" id="CHEBI:29105"/>
        <label>2</label>
    </ligand>
</feature>
<feature type="binding site" evidence="1">
    <location>
        <position position="174"/>
    </location>
    <ligand>
        <name>Zn(2+)</name>
        <dbReference type="ChEBI" id="CHEBI:29105"/>
        <label>2</label>
    </ligand>
</feature>
<feature type="binding site" evidence="1">
    <location>
        <position position="226"/>
    </location>
    <ligand>
        <name>Zn(2+)</name>
        <dbReference type="ChEBI" id="CHEBI:29105"/>
        <label>1</label>
        <note>catalytic</note>
    </ligand>
</feature>
<feature type="binding site" evidence="1">
    <location>
        <position position="227"/>
    </location>
    <ligand>
        <name>dihydroxyacetone phosphate</name>
        <dbReference type="ChEBI" id="CHEBI:57642"/>
    </ligand>
</feature>
<feature type="binding site" evidence="1">
    <location>
        <position position="264"/>
    </location>
    <ligand>
        <name>Zn(2+)</name>
        <dbReference type="ChEBI" id="CHEBI:29105"/>
        <label>1</label>
        <note>catalytic</note>
    </ligand>
</feature>
<feature type="binding site" evidence="1">
    <location>
        <begin position="265"/>
        <end position="267"/>
    </location>
    <ligand>
        <name>dihydroxyacetone phosphate</name>
        <dbReference type="ChEBI" id="CHEBI:57642"/>
    </ligand>
</feature>